<name>RL22_MYCA9</name>
<protein>
    <recommendedName>
        <fullName evidence="1">Large ribosomal subunit protein uL22</fullName>
    </recommendedName>
    <alternativeName>
        <fullName evidence="3">50S ribosomal protein L22</fullName>
    </alternativeName>
</protein>
<comment type="function">
    <text evidence="1">This protein binds specifically to 23S rRNA; its binding is stimulated by other ribosomal proteins, e.g. L4, L17, and L20. It is important during the early stages of 50S assembly. It makes multiple contacts with different domains of the 23S rRNA in the assembled 50S subunit and ribosome (By similarity).</text>
</comment>
<comment type="function">
    <text evidence="1">The globular domain of the protein is located near the polypeptide exit tunnel on the outside of the subunit, while an extended beta-hairpin is found that lines the wall of the exit tunnel in the center of the 70S ribosome.</text>
</comment>
<comment type="subunit">
    <text evidence="1">Part of the 50S ribosomal subunit.</text>
</comment>
<comment type="similarity">
    <text evidence="1">Belongs to the universal ribosomal protein uL22 family.</text>
</comment>
<reference key="1">
    <citation type="journal article" date="2009" name="PLoS ONE">
        <title>Non mycobacterial virulence genes in the genome of the emerging pathogen Mycobacterium abscessus.</title>
        <authorList>
            <person name="Ripoll F."/>
            <person name="Pasek S."/>
            <person name="Schenowitz C."/>
            <person name="Dossat C."/>
            <person name="Barbe V."/>
            <person name="Rottman M."/>
            <person name="Macheras E."/>
            <person name="Heym B."/>
            <person name="Herrmann J.L."/>
            <person name="Daffe M."/>
            <person name="Brosch R."/>
            <person name="Risler J.L."/>
            <person name="Gaillard J.L."/>
        </authorList>
    </citation>
    <scope>NUCLEOTIDE SEQUENCE [LARGE SCALE GENOMIC DNA]</scope>
    <source>
        <strain>ATCC 19977 / DSM 44196 / CCUG 20993 / CIP 104536 / JCM 13569 / NCTC 13031 / TMC 1543 / L948</strain>
    </source>
</reference>
<evidence type="ECO:0000255" key="1">
    <source>
        <dbReference type="HAMAP-Rule" id="MF_01331"/>
    </source>
</evidence>
<evidence type="ECO:0000256" key="2">
    <source>
        <dbReference type="SAM" id="MobiDB-lite"/>
    </source>
</evidence>
<evidence type="ECO:0000305" key="3"/>
<dbReference type="EMBL" id="CU458896">
    <property type="protein sequence ID" value="CAM63890.1"/>
    <property type="molecule type" value="Genomic_DNA"/>
</dbReference>
<dbReference type="RefSeq" id="WP_005055650.1">
    <property type="nucleotide sequence ID" value="NZ_MLCG01000001.1"/>
</dbReference>
<dbReference type="SMR" id="B1MGE5"/>
<dbReference type="GeneID" id="93380754"/>
<dbReference type="KEGG" id="mab:MAB_3815c"/>
<dbReference type="Proteomes" id="UP000007137">
    <property type="component" value="Chromosome"/>
</dbReference>
<dbReference type="GO" id="GO:0022625">
    <property type="term" value="C:cytosolic large ribosomal subunit"/>
    <property type="evidence" value="ECO:0007669"/>
    <property type="project" value="TreeGrafter"/>
</dbReference>
<dbReference type="GO" id="GO:0019843">
    <property type="term" value="F:rRNA binding"/>
    <property type="evidence" value="ECO:0007669"/>
    <property type="project" value="UniProtKB-UniRule"/>
</dbReference>
<dbReference type="GO" id="GO:0003735">
    <property type="term" value="F:structural constituent of ribosome"/>
    <property type="evidence" value="ECO:0007669"/>
    <property type="project" value="InterPro"/>
</dbReference>
<dbReference type="GO" id="GO:0006412">
    <property type="term" value="P:translation"/>
    <property type="evidence" value="ECO:0007669"/>
    <property type="project" value="UniProtKB-UniRule"/>
</dbReference>
<dbReference type="CDD" id="cd00336">
    <property type="entry name" value="Ribosomal_L22"/>
    <property type="match status" value="1"/>
</dbReference>
<dbReference type="FunFam" id="3.90.470.10:FF:000002">
    <property type="entry name" value="50S ribosomal protein L22"/>
    <property type="match status" value="1"/>
</dbReference>
<dbReference type="Gene3D" id="3.90.470.10">
    <property type="entry name" value="Ribosomal protein L22/L17"/>
    <property type="match status" value="1"/>
</dbReference>
<dbReference type="HAMAP" id="MF_01331_B">
    <property type="entry name" value="Ribosomal_uL22_B"/>
    <property type="match status" value="1"/>
</dbReference>
<dbReference type="InterPro" id="IPR001063">
    <property type="entry name" value="Ribosomal_uL22"/>
</dbReference>
<dbReference type="InterPro" id="IPR005727">
    <property type="entry name" value="Ribosomal_uL22_bac/chlpt-type"/>
</dbReference>
<dbReference type="InterPro" id="IPR047867">
    <property type="entry name" value="Ribosomal_uL22_bac/org-type"/>
</dbReference>
<dbReference type="InterPro" id="IPR018260">
    <property type="entry name" value="Ribosomal_uL22_CS"/>
</dbReference>
<dbReference type="InterPro" id="IPR036394">
    <property type="entry name" value="Ribosomal_uL22_sf"/>
</dbReference>
<dbReference type="NCBIfam" id="TIGR01044">
    <property type="entry name" value="rplV_bact"/>
    <property type="match status" value="1"/>
</dbReference>
<dbReference type="PANTHER" id="PTHR13501">
    <property type="entry name" value="CHLOROPLAST 50S RIBOSOMAL PROTEIN L22-RELATED"/>
    <property type="match status" value="1"/>
</dbReference>
<dbReference type="PANTHER" id="PTHR13501:SF8">
    <property type="entry name" value="LARGE RIBOSOMAL SUBUNIT PROTEIN UL22M"/>
    <property type="match status" value="1"/>
</dbReference>
<dbReference type="Pfam" id="PF00237">
    <property type="entry name" value="Ribosomal_L22"/>
    <property type="match status" value="1"/>
</dbReference>
<dbReference type="SUPFAM" id="SSF54843">
    <property type="entry name" value="Ribosomal protein L22"/>
    <property type="match status" value="1"/>
</dbReference>
<dbReference type="PROSITE" id="PS00464">
    <property type="entry name" value="RIBOSOMAL_L22"/>
    <property type="match status" value="1"/>
</dbReference>
<organism>
    <name type="scientific">Mycobacteroides abscessus (strain ATCC 19977 / DSM 44196 / CCUG 20993 / CIP 104536 / JCM 13569 / NCTC 13031 / TMC 1543 / L948)</name>
    <name type="common">Mycobacterium abscessus</name>
    <dbReference type="NCBI Taxonomy" id="561007"/>
    <lineage>
        <taxon>Bacteria</taxon>
        <taxon>Bacillati</taxon>
        <taxon>Actinomycetota</taxon>
        <taxon>Actinomycetes</taxon>
        <taxon>Mycobacteriales</taxon>
        <taxon>Mycobacteriaceae</taxon>
        <taxon>Mycobacteroides</taxon>
        <taxon>Mycobacteroides abscessus</taxon>
    </lineage>
</organism>
<proteinExistence type="inferred from homology"/>
<gene>
    <name evidence="1" type="primary">rplV</name>
    <name type="ordered locus">MAB_3815c</name>
</gene>
<keyword id="KW-1185">Reference proteome</keyword>
<keyword id="KW-0687">Ribonucleoprotein</keyword>
<keyword id="KW-0689">Ribosomal protein</keyword>
<keyword id="KW-0694">RNA-binding</keyword>
<keyword id="KW-0699">rRNA-binding</keyword>
<sequence>MTTTTEFPSATAKARFVRVSPTKARRVIDLVRGKSVNDAIDILRWAPQAASEPVAKVIASAAANAQNNDGLDPSTLVVSEIFADEGPTAKRIRPRAQGRAFRIRKRTSHITVVVESRPKQEKGGKAGASKASSRAARAQGSKAAAAKKTESKGGTS</sequence>
<accession>B1MGE5</accession>
<feature type="chain" id="PRO_1000142286" description="Large ribosomal subunit protein uL22">
    <location>
        <begin position="1"/>
        <end position="156"/>
    </location>
</feature>
<feature type="region of interest" description="Disordered" evidence="2">
    <location>
        <begin position="114"/>
        <end position="156"/>
    </location>
</feature>
<feature type="compositionally biased region" description="Low complexity" evidence="2">
    <location>
        <begin position="127"/>
        <end position="146"/>
    </location>
</feature>
<feature type="compositionally biased region" description="Basic and acidic residues" evidence="2">
    <location>
        <begin position="147"/>
        <end position="156"/>
    </location>
</feature>